<dbReference type="EMBL" id="D45862">
    <property type="protein sequence ID" value="BAA08296.1"/>
    <property type="molecule type" value="mRNA"/>
</dbReference>
<dbReference type="EMBL" id="S78586">
    <property type="protein sequence ID" value="AAB34657.2"/>
    <property type="molecule type" value="mRNA"/>
</dbReference>
<dbReference type="EMBL" id="D49653">
    <property type="protein sequence ID" value="BAA08529.1"/>
    <property type="molecule type" value="mRNA"/>
</dbReference>
<dbReference type="EMBL" id="U48849">
    <property type="protein sequence ID" value="AAC52514.1"/>
    <property type="molecule type" value="mRNA"/>
</dbReference>
<dbReference type="PIR" id="PC4034">
    <property type="entry name" value="LTRT"/>
</dbReference>
<dbReference type="RefSeq" id="NP_037208.1">
    <property type="nucleotide sequence ID" value="NM_013076.3"/>
</dbReference>
<dbReference type="RefSeq" id="XP_008760984.1">
    <property type="nucleotide sequence ID" value="XM_008762762.2"/>
</dbReference>
<dbReference type="SMR" id="P50596"/>
<dbReference type="BioGRID" id="247637">
    <property type="interactions" value="5"/>
</dbReference>
<dbReference type="FunCoup" id="P50596">
    <property type="interactions" value="11"/>
</dbReference>
<dbReference type="STRING" id="10116.ENSRNOP00000066184"/>
<dbReference type="PhosphoSitePlus" id="P50596"/>
<dbReference type="PaxDb" id="10116-ENSRNOP00000066184"/>
<dbReference type="Ensembl" id="ENSRNOT00000071926.2">
    <property type="protein sequence ID" value="ENSRNOP00000066184.1"/>
    <property type="gene ID" value="ENSRNOG00000045797.2"/>
</dbReference>
<dbReference type="GeneID" id="25608"/>
<dbReference type="KEGG" id="rno:25608"/>
<dbReference type="UCSC" id="RGD:3000">
    <property type="organism name" value="rat"/>
</dbReference>
<dbReference type="AGR" id="RGD:3000"/>
<dbReference type="CTD" id="3952"/>
<dbReference type="RGD" id="3000">
    <property type="gene designation" value="Lep"/>
</dbReference>
<dbReference type="eggNOG" id="ENOG502S5K5">
    <property type="taxonomic scope" value="Eukaryota"/>
</dbReference>
<dbReference type="GeneTree" id="ENSGT00390000011772"/>
<dbReference type="HOGENOM" id="CLU_132715_0_0_1"/>
<dbReference type="InParanoid" id="P50596"/>
<dbReference type="OMA" id="MRCGPLC"/>
<dbReference type="OrthoDB" id="9872512at2759"/>
<dbReference type="PhylomeDB" id="P50596"/>
<dbReference type="TreeFam" id="TF105086"/>
<dbReference type="Reactome" id="R-RNO-381771">
    <property type="pathway name" value="Synthesis, secretion, and inactivation of Glucagon-like Peptide-1 (GLP-1)"/>
</dbReference>
<dbReference type="Reactome" id="R-RNO-422085">
    <property type="pathway name" value="Synthesis, secretion, and deacylation of Ghrelin"/>
</dbReference>
<dbReference type="PRO" id="PR:P50596"/>
<dbReference type="Proteomes" id="UP000002494">
    <property type="component" value="Chromosome 4"/>
</dbReference>
<dbReference type="Bgee" id="ENSRNOG00000045797">
    <property type="expression patterns" value="Expressed in pancreas and 10 other cell types or tissues"/>
</dbReference>
<dbReference type="GO" id="GO:0005737">
    <property type="term" value="C:cytoplasm"/>
    <property type="evidence" value="ECO:0000266"/>
    <property type="project" value="RGD"/>
</dbReference>
<dbReference type="GO" id="GO:0005829">
    <property type="term" value="C:cytosol"/>
    <property type="evidence" value="ECO:0000314"/>
    <property type="project" value="ARUK-UCL"/>
</dbReference>
<dbReference type="GO" id="GO:0005615">
    <property type="term" value="C:extracellular space"/>
    <property type="evidence" value="ECO:0000314"/>
    <property type="project" value="HGNC-UCL"/>
</dbReference>
<dbReference type="GO" id="GO:0005125">
    <property type="term" value="F:cytokine activity"/>
    <property type="evidence" value="ECO:0000304"/>
    <property type="project" value="RGD"/>
</dbReference>
<dbReference type="GO" id="GO:0003677">
    <property type="term" value="F:DNA binding"/>
    <property type="evidence" value="ECO:0000266"/>
    <property type="project" value="RGD"/>
</dbReference>
<dbReference type="GO" id="GO:0005179">
    <property type="term" value="F:hormone activity"/>
    <property type="evidence" value="ECO:0000314"/>
    <property type="project" value="RGD"/>
</dbReference>
<dbReference type="GO" id="GO:1990460">
    <property type="term" value="F:leptin receptor binding"/>
    <property type="evidence" value="ECO:0000266"/>
    <property type="project" value="RGD"/>
</dbReference>
<dbReference type="GO" id="GO:0051428">
    <property type="term" value="F:peptide hormone receptor binding"/>
    <property type="evidence" value="ECO:0000314"/>
    <property type="project" value="RGD"/>
</dbReference>
<dbReference type="GO" id="GO:0005102">
    <property type="term" value="F:signaling receptor binding"/>
    <property type="evidence" value="ECO:0000353"/>
    <property type="project" value="RGD"/>
</dbReference>
<dbReference type="GO" id="GO:1990051">
    <property type="term" value="P:activation of protein kinase C activity"/>
    <property type="evidence" value="ECO:0000250"/>
    <property type="project" value="UniProtKB"/>
</dbReference>
<dbReference type="GO" id="GO:0060612">
    <property type="term" value="P:adipose tissue development"/>
    <property type="evidence" value="ECO:0000266"/>
    <property type="project" value="RGD"/>
</dbReference>
<dbReference type="GO" id="GO:0008343">
    <property type="term" value="P:adult feeding behavior"/>
    <property type="evidence" value="ECO:0000250"/>
    <property type="project" value="HGNC-UCL"/>
</dbReference>
<dbReference type="GO" id="GO:0001525">
    <property type="term" value="P:angiogenesis"/>
    <property type="evidence" value="ECO:0000266"/>
    <property type="project" value="RGD"/>
</dbReference>
<dbReference type="GO" id="GO:0035904">
    <property type="term" value="P:aorta development"/>
    <property type="evidence" value="ECO:0000266"/>
    <property type="project" value="RGD"/>
</dbReference>
<dbReference type="GO" id="GO:0008206">
    <property type="term" value="P:bile acid metabolic process"/>
    <property type="evidence" value="ECO:0000266"/>
    <property type="project" value="RGD"/>
</dbReference>
<dbReference type="GO" id="GO:0098868">
    <property type="term" value="P:bone growth"/>
    <property type="evidence" value="ECO:0000250"/>
    <property type="project" value="UniProtKB"/>
</dbReference>
<dbReference type="GO" id="GO:0035630">
    <property type="term" value="P:bone mineralization involved in bone maturation"/>
    <property type="evidence" value="ECO:0000314"/>
    <property type="project" value="RGD"/>
</dbReference>
<dbReference type="GO" id="GO:0019933">
    <property type="term" value="P:cAMP-mediated signaling"/>
    <property type="evidence" value="ECO:0000304"/>
    <property type="project" value="RGD"/>
</dbReference>
<dbReference type="GO" id="GO:0003300">
    <property type="term" value="P:cardiac muscle hypertrophy"/>
    <property type="evidence" value="ECO:0000314"/>
    <property type="project" value="RGD"/>
</dbReference>
<dbReference type="GO" id="GO:0007259">
    <property type="term" value="P:cell surface receptor signaling pathway via JAK-STAT"/>
    <property type="evidence" value="ECO:0000266"/>
    <property type="project" value="RGD"/>
</dbReference>
<dbReference type="GO" id="GO:0097696">
    <property type="term" value="P:cell surface receptor signaling pathway via STAT"/>
    <property type="evidence" value="ECO:0000266"/>
    <property type="project" value="RGD"/>
</dbReference>
<dbReference type="GO" id="GO:0032869">
    <property type="term" value="P:cellular response to insulin stimulus"/>
    <property type="evidence" value="ECO:0000266"/>
    <property type="project" value="RGD"/>
</dbReference>
<dbReference type="GO" id="GO:0071298">
    <property type="term" value="P:cellular response to L-ascorbic acid"/>
    <property type="evidence" value="ECO:0000270"/>
    <property type="project" value="RGD"/>
</dbReference>
<dbReference type="GO" id="GO:0044320">
    <property type="term" value="P:cellular response to leptin stimulus"/>
    <property type="evidence" value="ECO:0000266"/>
    <property type="project" value="RGD"/>
</dbReference>
<dbReference type="GO" id="GO:0071300">
    <property type="term" value="P:cellular response to retinoic acid"/>
    <property type="evidence" value="ECO:0000270"/>
    <property type="project" value="RGD"/>
</dbReference>
<dbReference type="GO" id="GO:0021954">
    <property type="term" value="P:central nervous system neuron development"/>
    <property type="evidence" value="ECO:0000266"/>
    <property type="project" value="RGD"/>
</dbReference>
<dbReference type="GO" id="GO:0008203">
    <property type="term" value="P:cholesterol metabolic process"/>
    <property type="evidence" value="ECO:0000266"/>
    <property type="project" value="RGD"/>
</dbReference>
<dbReference type="GO" id="GO:0007623">
    <property type="term" value="P:circadian rhythm"/>
    <property type="evidence" value="ECO:0000270"/>
    <property type="project" value="RGD"/>
</dbReference>
<dbReference type="GO" id="GO:0008340">
    <property type="term" value="P:determination of adult lifespan"/>
    <property type="evidence" value="ECO:0000266"/>
    <property type="project" value="RGD"/>
</dbReference>
<dbReference type="GO" id="GO:0042755">
    <property type="term" value="P:eating behavior"/>
    <property type="evidence" value="ECO:0000266"/>
    <property type="project" value="RGD"/>
</dbReference>
<dbReference type="GO" id="GO:0051541">
    <property type="term" value="P:elastin metabolic process"/>
    <property type="evidence" value="ECO:0000266"/>
    <property type="project" value="RGD"/>
</dbReference>
<dbReference type="GO" id="GO:0097009">
    <property type="term" value="P:energy homeostasis"/>
    <property type="evidence" value="ECO:0000266"/>
    <property type="project" value="RGD"/>
</dbReference>
<dbReference type="GO" id="GO:0006112">
    <property type="term" value="P:energy reserve metabolic process"/>
    <property type="evidence" value="ECO:0000314"/>
    <property type="project" value="RGD"/>
</dbReference>
<dbReference type="GO" id="GO:0006635">
    <property type="term" value="P:fatty acid beta-oxidation"/>
    <property type="evidence" value="ECO:0000266"/>
    <property type="project" value="RGD"/>
</dbReference>
<dbReference type="GO" id="GO:0009062">
    <property type="term" value="P:fatty acid catabolic process"/>
    <property type="evidence" value="ECO:0000314"/>
    <property type="project" value="RGD"/>
</dbReference>
<dbReference type="GO" id="GO:0007565">
    <property type="term" value="P:female pregnancy"/>
    <property type="evidence" value="ECO:0000270"/>
    <property type="project" value="RGD"/>
</dbReference>
<dbReference type="GO" id="GO:0042593">
    <property type="term" value="P:glucose homeostasis"/>
    <property type="evidence" value="ECO:0000266"/>
    <property type="project" value="RGD"/>
</dbReference>
<dbReference type="GO" id="GO:0006006">
    <property type="term" value="P:glucose metabolic process"/>
    <property type="evidence" value="ECO:0000266"/>
    <property type="project" value="RGD"/>
</dbReference>
<dbReference type="GO" id="GO:0006114">
    <property type="term" value="P:glycerol biosynthetic process"/>
    <property type="evidence" value="ECO:0000314"/>
    <property type="project" value="RGD"/>
</dbReference>
<dbReference type="GO" id="GO:0042445">
    <property type="term" value="P:hormone metabolic process"/>
    <property type="evidence" value="ECO:0000266"/>
    <property type="project" value="RGD"/>
</dbReference>
<dbReference type="GO" id="GO:0030073">
    <property type="term" value="P:insulin secretion"/>
    <property type="evidence" value="ECO:0000266"/>
    <property type="project" value="RGD"/>
</dbReference>
<dbReference type="GO" id="GO:0050892">
    <property type="term" value="P:intestinal absorption"/>
    <property type="evidence" value="ECO:0000250"/>
    <property type="project" value="UniProtKB"/>
</dbReference>
<dbReference type="GO" id="GO:0035556">
    <property type="term" value="P:intracellular signal transduction"/>
    <property type="evidence" value="ECO:0000314"/>
    <property type="project" value="RGD"/>
</dbReference>
<dbReference type="GO" id="GO:0033210">
    <property type="term" value="P:leptin-mediated signaling pathway"/>
    <property type="evidence" value="ECO:0000314"/>
    <property type="project" value="UniProtKB"/>
</dbReference>
<dbReference type="GO" id="GO:0050901">
    <property type="term" value="P:leukocyte tethering or rolling"/>
    <property type="evidence" value="ECO:0000314"/>
    <property type="project" value="RGD"/>
</dbReference>
<dbReference type="GO" id="GO:0006629">
    <property type="term" value="P:lipid metabolic process"/>
    <property type="evidence" value="ECO:0000266"/>
    <property type="project" value="RGD"/>
</dbReference>
<dbReference type="GO" id="GO:0043066">
    <property type="term" value="P:negative regulation of apoptotic process"/>
    <property type="evidence" value="ECO:0000314"/>
    <property type="project" value="RGD"/>
</dbReference>
<dbReference type="GO" id="GO:0032099">
    <property type="term" value="P:negative regulation of appetite"/>
    <property type="evidence" value="ECO:0000250"/>
    <property type="project" value="HGNC-UCL"/>
</dbReference>
<dbReference type="GO" id="GO:0038108">
    <property type="term" value="P:negative regulation of appetite by leptin-mediated signaling pathway"/>
    <property type="evidence" value="ECO:0000314"/>
    <property type="project" value="UniProtKB"/>
</dbReference>
<dbReference type="GO" id="GO:0010507">
    <property type="term" value="P:negative regulation of autophagy"/>
    <property type="evidence" value="ECO:0000250"/>
    <property type="project" value="UniProtKB"/>
</dbReference>
<dbReference type="GO" id="GO:0061037">
    <property type="term" value="P:negative regulation of cartilage development"/>
    <property type="evidence" value="ECO:0000314"/>
    <property type="project" value="RGD"/>
</dbReference>
<dbReference type="GO" id="GO:0046325">
    <property type="term" value="P:negative regulation of D-glucose import"/>
    <property type="evidence" value="ECO:0000250"/>
    <property type="project" value="UniProtKB"/>
</dbReference>
<dbReference type="GO" id="GO:0070093">
    <property type="term" value="P:negative regulation of glucagon secretion"/>
    <property type="evidence" value="ECO:0000266"/>
    <property type="project" value="RGD"/>
</dbReference>
<dbReference type="GO" id="GO:2000486">
    <property type="term" value="P:negative regulation of glutamine transport"/>
    <property type="evidence" value="ECO:0000315"/>
    <property type="project" value="RGD"/>
</dbReference>
<dbReference type="GO" id="GO:0046627">
    <property type="term" value="P:negative regulation of insulin receptor signaling pathway"/>
    <property type="evidence" value="ECO:0000266"/>
    <property type="project" value="RGD"/>
</dbReference>
<dbReference type="GO" id="GO:0010888">
    <property type="term" value="P:negative regulation of lipid storage"/>
    <property type="evidence" value="ECO:0000314"/>
    <property type="project" value="RGD"/>
</dbReference>
<dbReference type="GO" id="GO:0009892">
    <property type="term" value="P:negative regulation of metabolic process"/>
    <property type="evidence" value="ECO:0000314"/>
    <property type="project" value="RGD"/>
</dbReference>
<dbReference type="GO" id="GO:0000122">
    <property type="term" value="P:negative regulation of transcription by RNA polymerase II"/>
    <property type="evidence" value="ECO:0000266"/>
    <property type="project" value="RGD"/>
</dbReference>
<dbReference type="GO" id="GO:0045906">
    <property type="term" value="P:negative regulation of vasoconstriction"/>
    <property type="evidence" value="ECO:0000314"/>
    <property type="project" value="RGD"/>
</dbReference>
<dbReference type="GO" id="GO:0001542">
    <property type="term" value="P:ovulation from ovarian follicle"/>
    <property type="evidence" value="ECO:0000314"/>
    <property type="project" value="RGD"/>
</dbReference>
<dbReference type="GO" id="GO:0006909">
    <property type="term" value="P:phagocytosis"/>
    <property type="evidence" value="ECO:0000314"/>
    <property type="project" value="UniProtKB"/>
</dbReference>
<dbReference type="GO" id="GO:0001890">
    <property type="term" value="P:placenta development"/>
    <property type="evidence" value="ECO:0000266"/>
    <property type="project" value="RGD"/>
</dbReference>
<dbReference type="GO" id="GO:0008284">
    <property type="term" value="P:positive regulation of cell population proliferation"/>
    <property type="evidence" value="ECO:0000314"/>
    <property type="project" value="RGD"/>
</dbReference>
<dbReference type="GO" id="GO:0120162">
    <property type="term" value="P:positive regulation of cold-induced thermogenesis"/>
    <property type="evidence" value="ECO:0000250"/>
    <property type="project" value="YuBioLab"/>
</dbReference>
<dbReference type="GO" id="GO:0001819">
    <property type="term" value="P:positive regulation of cytokine production"/>
    <property type="evidence" value="ECO:0000270"/>
    <property type="project" value="RGD"/>
</dbReference>
<dbReference type="GO" id="GO:0048639">
    <property type="term" value="P:positive regulation of developmental growth"/>
    <property type="evidence" value="ECO:0000266"/>
    <property type="project" value="RGD"/>
</dbReference>
<dbReference type="GO" id="GO:1904651">
    <property type="term" value="P:positive regulation of fat cell apoptotic process"/>
    <property type="evidence" value="ECO:0000314"/>
    <property type="project" value="RGD"/>
</dbReference>
<dbReference type="GO" id="GO:0046881">
    <property type="term" value="P:positive regulation of follicle-stimulating hormone secretion"/>
    <property type="evidence" value="ECO:0000270"/>
    <property type="project" value="RGD"/>
</dbReference>
<dbReference type="GO" id="GO:2000491">
    <property type="term" value="P:positive regulation of hepatic stellate cell activation"/>
    <property type="evidence" value="ECO:0000314"/>
    <property type="project" value="RGD"/>
</dbReference>
<dbReference type="GO" id="GO:0046628">
    <property type="term" value="P:positive regulation of insulin receptor signaling pathway"/>
    <property type="evidence" value="ECO:0000314"/>
    <property type="project" value="RGD"/>
</dbReference>
<dbReference type="GO" id="GO:0032735">
    <property type="term" value="P:positive regulation of interleukin-12 production"/>
    <property type="evidence" value="ECO:0000250"/>
    <property type="project" value="UniProtKB"/>
</dbReference>
<dbReference type="GO" id="GO:0032755">
    <property type="term" value="P:positive regulation of interleukin-6 production"/>
    <property type="evidence" value="ECO:0000250"/>
    <property type="project" value="UniProtKB"/>
</dbReference>
<dbReference type="GO" id="GO:0032757">
    <property type="term" value="P:positive regulation of interleukin-8 production"/>
    <property type="evidence" value="ECO:0000250"/>
    <property type="project" value="UniProtKB"/>
</dbReference>
<dbReference type="GO" id="GO:0033686">
    <property type="term" value="P:positive regulation of luteinizing hormone secretion"/>
    <property type="evidence" value="ECO:0000270"/>
    <property type="project" value="RGD"/>
</dbReference>
<dbReference type="GO" id="GO:0043410">
    <property type="term" value="P:positive regulation of MAPK cascade"/>
    <property type="evidence" value="ECO:0000314"/>
    <property type="project" value="RGD"/>
</dbReference>
<dbReference type="GO" id="GO:0043270">
    <property type="term" value="P:positive regulation of monoatomic ion transport"/>
    <property type="evidence" value="ECO:0000314"/>
    <property type="project" value="RGD"/>
</dbReference>
<dbReference type="GO" id="GO:1900745">
    <property type="term" value="P:positive regulation of p38MAPK cascade"/>
    <property type="evidence" value="ECO:0000250"/>
    <property type="project" value="UniProtKB"/>
</dbReference>
<dbReference type="GO" id="GO:0035360">
    <property type="term" value="P:positive regulation of peroxisome proliferator activated receptor signaling pathway"/>
    <property type="evidence" value="ECO:0000314"/>
    <property type="project" value="RGD"/>
</dbReference>
<dbReference type="GO" id="GO:0051897">
    <property type="term" value="P:positive regulation of phosphatidylinositol 3-kinase/protein kinase B signal transduction"/>
    <property type="evidence" value="ECO:0000314"/>
    <property type="project" value="UniProtKB"/>
</dbReference>
<dbReference type="GO" id="GO:0042307">
    <property type="term" value="P:positive regulation of protein import into nucleus"/>
    <property type="evidence" value="ECO:0000266"/>
    <property type="project" value="RGD"/>
</dbReference>
<dbReference type="GO" id="GO:2000379">
    <property type="term" value="P:positive regulation of reactive oxygen species metabolic process"/>
    <property type="evidence" value="ECO:0000314"/>
    <property type="project" value="RGD"/>
</dbReference>
<dbReference type="GO" id="GO:0046427">
    <property type="term" value="P:positive regulation of receptor signaling pathway via JAK-STAT"/>
    <property type="evidence" value="ECO:0000315"/>
    <property type="project" value="RGD"/>
</dbReference>
<dbReference type="GO" id="GO:0042102">
    <property type="term" value="P:positive regulation of T cell proliferation"/>
    <property type="evidence" value="ECO:0000250"/>
    <property type="project" value="UniProtKB"/>
</dbReference>
<dbReference type="GO" id="GO:0032008">
    <property type="term" value="P:positive regulation of TOR signaling"/>
    <property type="evidence" value="ECO:0000250"/>
    <property type="project" value="UniProtKB"/>
</dbReference>
<dbReference type="GO" id="GO:0032760">
    <property type="term" value="P:positive regulation of tumor necrosis factor production"/>
    <property type="evidence" value="ECO:0000250"/>
    <property type="project" value="UniProtKB"/>
</dbReference>
<dbReference type="GO" id="GO:0032310">
    <property type="term" value="P:prostaglandin secretion"/>
    <property type="evidence" value="ECO:0000250"/>
    <property type="project" value="UniProtKB"/>
</dbReference>
<dbReference type="GO" id="GO:0045765">
    <property type="term" value="P:regulation of angiogenesis"/>
    <property type="evidence" value="ECO:0000250"/>
    <property type="project" value="UniProtKB"/>
</dbReference>
<dbReference type="GO" id="GO:0008217">
    <property type="term" value="P:regulation of blood pressure"/>
    <property type="evidence" value="ECO:0000314"/>
    <property type="project" value="RGD"/>
</dbReference>
<dbReference type="GO" id="GO:0046850">
    <property type="term" value="P:regulation of bone remodeling"/>
    <property type="evidence" value="ECO:0000250"/>
    <property type="project" value="UniProtKB"/>
</dbReference>
<dbReference type="GO" id="GO:0090335">
    <property type="term" value="P:regulation of brown fat cell differentiation"/>
    <property type="evidence" value="ECO:0000250"/>
    <property type="project" value="UniProtKB"/>
</dbReference>
<dbReference type="GO" id="GO:0051726">
    <property type="term" value="P:regulation of cell cycle"/>
    <property type="evidence" value="ECO:0000250"/>
    <property type="project" value="UniProtKB"/>
</dbReference>
<dbReference type="GO" id="GO:1900015">
    <property type="term" value="P:regulation of cytokine production involved in inflammatory response"/>
    <property type="evidence" value="ECO:0000250"/>
    <property type="project" value="UniProtKB"/>
</dbReference>
<dbReference type="GO" id="GO:0001936">
    <property type="term" value="P:regulation of endothelial cell proliferation"/>
    <property type="evidence" value="ECO:0000250"/>
    <property type="project" value="UniProtKB"/>
</dbReference>
<dbReference type="GO" id="GO:0045598">
    <property type="term" value="P:regulation of fat cell differentiation"/>
    <property type="evidence" value="ECO:0000266"/>
    <property type="project" value="RGD"/>
</dbReference>
<dbReference type="GO" id="GO:0006111">
    <property type="term" value="P:regulation of gluconeogenesis"/>
    <property type="evidence" value="ECO:0000266"/>
    <property type="project" value="RGD"/>
</dbReference>
<dbReference type="GO" id="GO:0050796">
    <property type="term" value="P:regulation of insulin secretion"/>
    <property type="evidence" value="ECO:0000266"/>
    <property type="project" value="RGD"/>
</dbReference>
<dbReference type="GO" id="GO:0030300">
    <property type="term" value="P:regulation of intestinal cholesterol absorption"/>
    <property type="evidence" value="ECO:0000266"/>
    <property type="project" value="RGD"/>
</dbReference>
<dbReference type="GO" id="GO:0046890">
    <property type="term" value="P:regulation of lipid biosynthetic process"/>
    <property type="evidence" value="ECO:0000266"/>
    <property type="project" value="RGD"/>
</dbReference>
<dbReference type="GO" id="GO:0060587">
    <property type="term" value="P:regulation of lipoprotein lipid oxidation"/>
    <property type="evidence" value="ECO:0000314"/>
    <property type="project" value="RGD"/>
</dbReference>
<dbReference type="GO" id="GO:0019222">
    <property type="term" value="P:regulation of metabolic process"/>
    <property type="evidence" value="ECO:0000266"/>
    <property type="project" value="RGD"/>
</dbReference>
<dbReference type="GO" id="GO:0032814">
    <property type="term" value="P:regulation of natural killer cell activation"/>
    <property type="evidence" value="ECO:0000250"/>
    <property type="project" value="UniProtKB"/>
</dbReference>
<dbReference type="GO" id="GO:0042269">
    <property type="term" value="P:regulation of natural killer cell mediated cytotoxicity"/>
    <property type="evidence" value="ECO:0000250"/>
    <property type="project" value="UniProtKB"/>
</dbReference>
<dbReference type="GO" id="GO:0032817">
    <property type="term" value="P:regulation of natural killer cell proliferation"/>
    <property type="evidence" value="ECO:0000250"/>
    <property type="project" value="UniProtKB"/>
</dbReference>
<dbReference type="GO" id="GO:0050999">
    <property type="term" value="P:regulation of nitric-oxide synthase activity"/>
    <property type="evidence" value="ECO:0000250"/>
    <property type="project" value="UniProtKB"/>
</dbReference>
<dbReference type="GO" id="GO:1900180">
    <property type="term" value="P:regulation of protein localization to nucleus"/>
    <property type="evidence" value="ECO:0000266"/>
    <property type="project" value="RGD"/>
</dbReference>
<dbReference type="GO" id="GO:0050810">
    <property type="term" value="P:regulation of steroid biosynthetic process"/>
    <property type="evidence" value="ECO:0000266"/>
    <property type="project" value="RGD"/>
</dbReference>
<dbReference type="GO" id="GO:0014823">
    <property type="term" value="P:response to activity"/>
    <property type="evidence" value="ECO:0000270"/>
    <property type="project" value="RGD"/>
</dbReference>
<dbReference type="GO" id="GO:0002021">
    <property type="term" value="P:response to dietary excess"/>
    <property type="evidence" value="ECO:0000315"/>
    <property type="project" value="RGD"/>
</dbReference>
<dbReference type="GO" id="GO:0032355">
    <property type="term" value="P:response to estradiol"/>
    <property type="evidence" value="ECO:0000270"/>
    <property type="project" value="RGD"/>
</dbReference>
<dbReference type="GO" id="GO:0045471">
    <property type="term" value="P:response to ethanol"/>
    <property type="evidence" value="ECO:0000270"/>
    <property type="project" value="RGD"/>
</dbReference>
<dbReference type="GO" id="GO:0001666">
    <property type="term" value="P:response to hypoxia"/>
    <property type="evidence" value="ECO:0000270"/>
    <property type="project" value="RGD"/>
</dbReference>
<dbReference type="GO" id="GO:0032868">
    <property type="term" value="P:response to insulin"/>
    <property type="evidence" value="ECO:0000266"/>
    <property type="project" value="RGD"/>
</dbReference>
<dbReference type="GO" id="GO:0007584">
    <property type="term" value="P:response to nutrient"/>
    <property type="evidence" value="ECO:0000270"/>
    <property type="project" value="RGD"/>
</dbReference>
<dbReference type="GO" id="GO:0031667">
    <property type="term" value="P:response to nutrient levels"/>
    <property type="evidence" value="ECO:0000270"/>
    <property type="project" value="RGD"/>
</dbReference>
<dbReference type="GO" id="GO:0033197">
    <property type="term" value="P:response to vitamin E"/>
    <property type="evidence" value="ECO:0000270"/>
    <property type="project" value="RGD"/>
</dbReference>
<dbReference type="GO" id="GO:0019953">
    <property type="term" value="P:sexual reproduction"/>
    <property type="evidence" value="ECO:0000266"/>
    <property type="project" value="RGD"/>
</dbReference>
<dbReference type="GO" id="GO:0030217">
    <property type="term" value="P:T cell differentiation"/>
    <property type="evidence" value="ECO:0000250"/>
    <property type="project" value="UniProtKB"/>
</dbReference>
<dbReference type="FunFam" id="1.20.1250.10:FF:000008">
    <property type="entry name" value="Leptin"/>
    <property type="match status" value="1"/>
</dbReference>
<dbReference type="Gene3D" id="1.20.1250.10">
    <property type="match status" value="1"/>
</dbReference>
<dbReference type="InterPro" id="IPR009079">
    <property type="entry name" value="4_helix_cytokine-like_core"/>
</dbReference>
<dbReference type="InterPro" id="IPR000065">
    <property type="entry name" value="Leptin"/>
</dbReference>
<dbReference type="PANTHER" id="PTHR11724">
    <property type="entry name" value="LEPTIN"/>
    <property type="match status" value="1"/>
</dbReference>
<dbReference type="PANTHER" id="PTHR11724:SF1">
    <property type="entry name" value="LEPTIN"/>
    <property type="match status" value="1"/>
</dbReference>
<dbReference type="Pfam" id="PF02024">
    <property type="entry name" value="Leptin"/>
    <property type="match status" value="1"/>
</dbReference>
<dbReference type="PIRSF" id="PIRSF001837">
    <property type="entry name" value="Leptin"/>
    <property type="match status" value="1"/>
</dbReference>
<dbReference type="PRINTS" id="PR00495">
    <property type="entry name" value="LEPTIN"/>
</dbReference>
<dbReference type="SUPFAM" id="SSF47266">
    <property type="entry name" value="4-helical cytokines"/>
    <property type="match status" value="1"/>
</dbReference>
<accession>P50596</accession>
<comment type="function">
    <text evidence="2 3 5 6 7 8 10 11">Key player in the regulation of energy balance and body weight control. Once released into the circulation, has central and peripheral effects by binding LEPR, found in many tissues, which results in the activation of several major signaling pathways (By similarity) (PubMed:11677594). In the hypothalamus, acts as an appetite-regulating factor that induces a decrease in food intake and an increase in energy consumption by inducing anorexinogenic factors and suppressing orexigenic neuropeptides, also regulates bone mass and secretion of hypothalamo-pituitary-adrenal hormones. In the periphery, increases basal metabolism, influences reproductive function, regulates pancreatic beta-cell function and insulin secretion, is pro-angiogenic for endothelial cell and affects innate and adaptive immunity (By similarity) (PubMed:10482243, PubMed:11460888, PubMed:11677594, PubMed:9003024). In the arcuate nucleus of the hypothalamus, activates by depolarization POMC neurons inducing FOS and SOCS3 expression to release anorexigenic peptides and inhibits by hyperpolarization NPY neurons inducing SOCS3 with a consequent reduction on release of orexigenic peptides (By similarity) (PubMed:10482243, PubMed:9003024). In addition to its known satiety inducing effect, has a modulatory role in nutrient absorption. In the intestine, reduces glucose absorption by enterocytes by activating PKC and leading to a sequential activation of p38, PI3K and ERK signaling pathways which exerts an inhibitory effect on glucose absorption (By similarity). Acts as a growth factor on certain tissues, through the activation of different signaling pathways increases expression of genes involved in cell cycle regulation such as CCND1, via JAK2-STAT3 pathway, or VEGFA, via MAPK1/3 and PI3K-AKT1 pathways (By similarity). May also play an apoptotic role via JAK2-STAT3 pathway and up-regulation of BIRC5 expression (By similarity). Pro-angiogenic, has mitogenic activity on vascular endothelial cells and plays a role in matrix remodeling by regulating the expression of matrix metalloproteinases (MMPs) and tissue inhibitors of metalloproteinases (TIMPs) (PubMed:11460888). In innate immunity, modulates the activity and function of neutrophils by increasing chemotaxis and the secretion of oxygen radicals. Increases phagocytosis by macrophages and enhances secretion of pro-inflammatory mediators. Increases cytotoxic ability of NK cells (Probable). Plays a pro-inflammatory role, in synergy with IL1B, by inducing NOS2 which promotes the production of IL6, IL8 and Prostaglandin E2, through a signaling pathway that involves JAK2, PI3K, MAP2K1/MEK1 and MAPK14/p38 (By similarity). In adaptive immunity, promotes the switch of memory T-cells towards T helper-1 cell immune responses (By similarity). Increases CD4(+)CD25(-) T-cell proliferation and reduces autophagy during TCR (T-cell receptor) stimulation, through MTOR signaling pathway activation and BCL2 up-regulation (By similarity).</text>
</comment>
<comment type="subcellular location">
    <subcellularLocation>
        <location evidence="11">Secreted</location>
    </subcellularLocation>
</comment>
<comment type="similarity">
    <text evidence="9">Belongs to the leptin family.</text>
</comment>
<evidence type="ECO:0000250" key="1"/>
<evidence type="ECO:0000250" key="2">
    <source>
        <dbReference type="UniProtKB" id="P41159"/>
    </source>
</evidence>
<evidence type="ECO:0000250" key="3">
    <source>
        <dbReference type="UniProtKB" id="P41160"/>
    </source>
</evidence>
<evidence type="ECO:0000255" key="4"/>
<evidence type="ECO:0000269" key="5">
    <source>
    </source>
</evidence>
<evidence type="ECO:0000269" key="6">
    <source>
    </source>
</evidence>
<evidence type="ECO:0000269" key="7">
    <source>
    </source>
</evidence>
<evidence type="ECO:0000269" key="8">
    <source>
    </source>
</evidence>
<evidence type="ECO:0000305" key="9"/>
<evidence type="ECO:0000305" key="10">
    <source>
    </source>
</evidence>
<evidence type="ECO:0000305" key="11">
    <source>
    </source>
</evidence>
<gene>
    <name type="primary">Lep</name>
    <name type="synonym">Ob</name>
</gene>
<feature type="signal peptide" evidence="4">
    <location>
        <begin position="1"/>
        <end position="21"/>
    </location>
</feature>
<feature type="chain" id="PRO_0000017690" description="Leptin">
    <location>
        <begin position="22"/>
        <end position="167"/>
    </location>
</feature>
<feature type="disulfide bond" evidence="1">
    <location>
        <begin position="117"/>
        <end position="167"/>
    </location>
</feature>
<feature type="sequence conflict" description="In Ref. 2." evidence="9" ref="2">
    <original>K</original>
    <variation>T</variation>
    <location>
        <position position="32"/>
    </location>
</feature>
<feature type="sequence conflict" description="In Ref. 4; AAC52514." evidence="9" ref="4">
    <original>L</original>
    <variation>V</variation>
    <location>
        <position position="163"/>
    </location>
</feature>
<sequence>MCWRPLCRFLWLWSYLSYVQAVPIHKVQDDTKTLIKTIVTRINDISHTQSVSARQRVTGLDFIPGLHPILSLSKMDQTLAVYQQILTSLPSQNVLQIAHDLENLRDLLHLLAFSKSCSLPQTRGLQKPESLDGVLEASLYSTEVVALSRLQGSLQDILQQLDLSPEC</sequence>
<name>LEP_RAT</name>
<organism>
    <name type="scientific">Rattus norvegicus</name>
    <name type="common">Rat</name>
    <dbReference type="NCBI Taxonomy" id="10116"/>
    <lineage>
        <taxon>Eukaryota</taxon>
        <taxon>Metazoa</taxon>
        <taxon>Chordata</taxon>
        <taxon>Craniata</taxon>
        <taxon>Vertebrata</taxon>
        <taxon>Euteleostomi</taxon>
        <taxon>Mammalia</taxon>
        <taxon>Eutheria</taxon>
        <taxon>Euarchontoglires</taxon>
        <taxon>Glires</taxon>
        <taxon>Rodentia</taxon>
        <taxon>Myomorpha</taxon>
        <taxon>Muroidea</taxon>
        <taxon>Muridae</taxon>
        <taxon>Murinae</taxon>
        <taxon>Rattus</taxon>
    </lineage>
</organism>
<proteinExistence type="evidence at protein level"/>
<reference key="1">
    <citation type="journal article" date="1995" name="J. Clin. Invest.">
        <title>Molecular cloning of rat obese cDNA and augmented gene expression in genetically obese Zucker fatty (fa/fa) rats.</title>
        <authorList>
            <person name="Ogawa Y."/>
            <person name="Masuzaki H."/>
            <person name="Isse N."/>
            <person name="Okazaki T."/>
            <person name="Mori K."/>
            <person name="Shigemoto M."/>
            <person name="Satoh N."/>
            <person name="Tamura N."/>
            <person name="Hosoda K."/>
            <person name="Yoshimasa Y."/>
            <person name="Jingami H."/>
            <person name="Kawada T."/>
            <person name="Nakao K."/>
        </authorList>
    </citation>
    <scope>NUCLEOTIDE SEQUENCE [MRNA]</scope>
    <source>
        <tissue>Testis</tissue>
    </source>
</reference>
<reference key="2">
    <citation type="journal article" date="1995" name="Biochem. Biophys. Res. Commun.">
        <title>Enhanced expression of rat obese (ob) gene in adipose tissues of ventromedial hypothalamus (VMH)-lesioned rats.</title>
        <authorList>
            <person name="Funahashi T."/>
            <person name="Shimomura I."/>
            <person name="Hiraoka H."/>
            <person name="Arai T."/>
            <person name="Takahashi M."/>
            <person name="Nakamura T."/>
            <person name="Nozaki S."/>
            <person name="Yamashita S."/>
            <person name="Takemura K."/>
            <person name="Tokunaga K."/>
        </authorList>
    </citation>
    <scope>NUCLEOTIDE SEQUENCE [MRNA]</scope>
    <source>
        <strain>Sprague-Dawley</strain>
        <tissue>Adipose tissue</tissue>
    </source>
</reference>
<reference key="3">
    <citation type="journal article" date="1995" name="Biochem. Biophys. Res. Commun.">
        <title>Cloning of rat obese cDNA and its expression in obese rats.</title>
        <authorList>
            <person name="Murakami T."/>
            <person name="Shima K."/>
        </authorList>
    </citation>
    <scope>NUCLEOTIDE SEQUENCE [MRNA]</scope>
    <source>
        <strain>OLETF</strain>
        <strain>Zucker</strain>
        <tissue>Adipose tissue</tissue>
    </source>
</reference>
<reference key="4">
    <citation type="submission" date="1996-02" db="EMBL/GenBank/DDBJ databases">
        <authorList>
            <person name="Donohoue P.A."/>
            <person name="Sivitz W.I."/>
            <person name="Bailey H.L."/>
        </authorList>
    </citation>
    <scope>NUCLEOTIDE SEQUENCE [MRNA] OF 14-167</scope>
    <source>
        <strain>Sprague-Dawley</strain>
        <tissue>Adipose tissue</tissue>
    </source>
</reference>
<reference key="5">
    <citation type="journal article" date="1997" name="Endocrinology">
        <title>Leptin activates neurons in ventrobasal hypothalamus and brainstem.</title>
        <authorList>
            <person name="Elmquist J.K."/>
            <person name="Ahima R.S."/>
            <person name="Maratos-Flier E."/>
            <person name="Flier J.S."/>
            <person name="Saper C.B."/>
        </authorList>
    </citation>
    <scope>FUNCTION</scope>
</reference>
<reference key="6">
    <citation type="journal article" date="1999" name="Neuron">
        <title>Leptin differentially regulates NPY and POMC neurons projecting to the lateral hypothalamic area.</title>
        <authorList>
            <person name="Elias C.F."/>
            <person name="Aschkenasi C."/>
            <person name="Lee C."/>
            <person name="Kelly J."/>
            <person name="Ahima R.S."/>
            <person name="Bjorbaek C."/>
            <person name="Flier J.S."/>
            <person name="Saper C.B."/>
            <person name="Elmquist J.K."/>
        </authorList>
    </citation>
    <scope>FUNCTION</scope>
</reference>
<reference key="7">
    <citation type="journal article" date="2001" name="Exp. Mol. Med.">
        <title>Potential role of leptin in angiogenesis: leptin induces endothelial cell proliferation and expression of matrix metalloproteinases in vivo and in vitro.</title>
        <authorList>
            <person name="Park H.Y."/>
            <person name="Kwon H.M."/>
            <person name="Lim H.J."/>
            <person name="Hong B.K."/>
            <person name="Lee J.Y."/>
            <person name="Park B.E."/>
            <person name="Jang Y."/>
            <person name="Cho S.Y."/>
            <person name="Kim H.S."/>
        </authorList>
    </citation>
    <scope>FUNCTION</scope>
</reference>
<reference key="8">
    <citation type="journal article" date="2001" name="Nature">
        <title>Intracellular signaling. Key enzyme in leptin-induced anorexia.</title>
        <authorList>
            <person name="Niswender K.D."/>
            <person name="Morton G.J."/>
            <person name="Stearns W.H."/>
            <person name="Rhodes C.J."/>
            <person name="Myers M.G. Jr."/>
            <person name="Schwartz M.W."/>
        </authorList>
    </citation>
    <scope>FUNCTION</scope>
</reference>
<reference key="9">
    <citation type="journal article" date="2004" name="Nat. Rev. Immunol.">
        <title>The weight of leptin in immunity.</title>
        <authorList>
            <person name="La Cava A."/>
            <person name="Matarese G."/>
        </authorList>
    </citation>
    <scope>REVIEW OF FUNCTION IN IMMUNITY</scope>
</reference>
<reference key="10">
    <citation type="journal article" date="2014" name="J. Endocrinol.">
        <title>20 years of leptin: connecting leptin signaling to biological function.</title>
        <authorList>
            <person name="Allison M.B."/>
            <person name="Myers M.G. Jr."/>
        </authorList>
    </citation>
    <scope>REVIEW OF FUNCTION</scope>
</reference>
<protein>
    <recommendedName>
        <fullName>Leptin</fullName>
    </recommendedName>
    <alternativeName>
        <fullName>Obesity factor</fullName>
    </alternativeName>
</protein>
<keyword id="KW-1015">Disulfide bond</keyword>
<keyword id="KW-0550">Obesity</keyword>
<keyword id="KW-1185">Reference proteome</keyword>
<keyword id="KW-0964">Secreted</keyword>
<keyword id="KW-0732">Signal</keyword>